<reference key="1">
    <citation type="journal article" date="2005" name="Infect. Immun.">
        <title>Comparative genomic analysis of Chlamydia trachomatis oculotropic and genitotropic strains.</title>
        <authorList>
            <person name="Carlson J.H."/>
            <person name="Porcella S.F."/>
            <person name="McClarty G."/>
            <person name="Caldwell H.D."/>
        </authorList>
    </citation>
    <scope>NUCLEOTIDE SEQUENCE [LARGE SCALE GENOMIC DNA]</scope>
    <source>
        <strain>ATCC VR-571B / DSM 19440 / HAR-13</strain>
    </source>
</reference>
<sequence>MSLSPSRIRLLDSVTVNQISAGEVIENAASVVKELIENSLDAGADEIHIETLGGGRGQIVVRDNGVGMDPEEVPVALQRHATSKIAHFADIFSLASYGFRGEALPSIASISKMEIHTARAGGLGSKTLIEKGEPVCCEPAPRQQGTTIAVHSLFYNVPMRQSFQKSPQMDRLAIRRLLENSVLSSEGIGWTWISECRQELYVAKKQGFIERVALVLGESFVQEAFFIDKQQGDLRVLGFLGSPNQHRSTRQGQRLFINNRAVESSFISKKVAEAYAWMIPAQRYPIFVLKLFLPPMWCDFNVHPQKTEVRLLQEGQISNLLVEAISEALLRRSPSLEETVLKVPTEKIPIENEGISVPSIRPAIVSAPLSCPTFSQQPYLKTEMATIVSRDSASSSLSVVEKVRFLTSLGKVLLVEDSEGVHVVFVQAARKHLFYVSLLSERLESRLACQTFLLPSSVQMTKLEADFLQMRLEALTALGIELSRISPDSFAIESAPPFIQEEELKEWIVALAQEGALHVGESFEQLVENTVQKLVFSRNARAFDYAWLDILWKLGKPEKAFDGEMIRRLVLDDDFM</sequence>
<proteinExistence type="inferred from homology"/>
<protein>
    <recommendedName>
        <fullName evidence="1">DNA mismatch repair protein MutL</fullName>
    </recommendedName>
</protein>
<evidence type="ECO:0000255" key="1">
    <source>
        <dbReference type="HAMAP-Rule" id="MF_00149"/>
    </source>
</evidence>
<accession>Q3KLC2</accession>
<comment type="function">
    <text evidence="1">This protein is involved in the repair of mismatches in DNA. It is required for dam-dependent methyl-directed DNA mismatch repair. May act as a 'molecular matchmaker', a protein that promotes the formation of a stable complex between two or more DNA-binding proteins in an ATP-dependent manner without itself being part of a final effector complex.</text>
</comment>
<comment type="similarity">
    <text evidence="1">Belongs to the DNA mismatch repair MutL/HexB family.</text>
</comment>
<name>MUTL_CHLTA</name>
<gene>
    <name evidence="1" type="primary">mutL</name>
    <name type="ordered locus">CTA_0625</name>
</gene>
<feature type="chain" id="PRO_1000010003" description="DNA mismatch repair protein MutL">
    <location>
        <begin position="1"/>
        <end position="576"/>
    </location>
</feature>
<dbReference type="EMBL" id="CP000051">
    <property type="protein sequence ID" value="AAX50850.1"/>
    <property type="molecule type" value="Genomic_DNA"/>
</dbReference>
<dbReference type="RefSeq" id="WP_009871940.1">
    <property type="nucleotide sequence ID" value="NC_007429.1"/>
</dbReference>
<dbReference type="SMR" id="Q3KLC2"/>
<dbReference type="KEGG" id="cta:CTA_0625"/>
<dbReference type="HOGENOM" id="CLU_004131_4_3_0"/>
<dbReference type="Proteomes" id="UP000002532">
    <property type="component" value="Chromosome"/>
</dbReference>
<dbReference type="GO" id="GO:0032300">
    <property type="term" value="C:mismatch repair complex"/>
    <property type="evidence" value="ECO:0007669"/>
    <property type="project" value="InterPro"/>
</dbReference>
<dbReference type="GO" id="GO:0005524">
    <property type="term" value="F:ATP binding"/>
    <property type="evidence" value="ECO:0007669"/>
    <property type="project" value="InterPro"/>
</dbReference>
<dbReference type="GO" id="GO:0016887">
    <property type="term" value="F:ATP hydrolysis activity"/>
    <property type="evidence" value="ECO:0007669"/>
    <property type="project" value="InterPro"/>
</dbReference>
<dbReference type="GO" id="GO:0140664">
    <property type="term" value="F:ATP-dependent DNA damage sensor activity"/>
    <property type="evidence" value="ECO:0007669"/>
    <property type="project" value="InterPro"/>
</dbReference>
<dbReference type="GO" id="GO:0030983">
    <property type="term" value="F:mismatched DNA binding"/>
    <property type="evidence" value="ECO:0007669"/>
    <property type="project" value="InterPro"/>
</dbReference>
<dbReference type="GO" id="GO:0006298">
    <property type="term" value="P:mismatch repair"/>
    <property type="evidence" value="ECO:0007669"/>
    <property type="project" value="UniProtKB-UniRule"/>
</dbReference>
<dbReference type="CDD" id="cd16926">
    <property type="entry name" value="HATPase_MutL-MLH-PMS-like"/>
    <property type="match status" value="1"/>
</dbReference>
<dbReference type="CDD" id="cd00782">
    <property type="entry name" value="MutL_Trans"/>
    <property type="match status" value="1"/>
</dbReference>
<dbReference type="FunFam" id="3.30.565.10:FF:000003">
    <property type="entry name" value="DNA mismatch repair endonuclease MutL"/>
    <property type="match status" value="1"/>
</dbReference>
<dbReference type="Gene3D" id="3.30.230.10">
    <property type="match status" value="1"/>
</dbReference>
<dbReference type="Gene3D" id="3.30.565.10">
    <property type="entry name" value="Histidine kinase-like ATPase, C-terminal domain"/>
    <property type="match status" value="1"/>
</dbReference>
<dbReference type="Gene3D" id="3.30.1540.20">
    <property type="entry name" value="MutL, C-terminal domain, dimerisation subdomain"/>
    <property type="match status" value="1"/>
</dbReference>
<dbReference type="Gene3D" id="3.30.1370.100">
    <property type="entry name" value="MutL, C-terminal domain, regulatory subdomain"/>
    <property type="match status" value="1"/>
</dbReference>
<dbReference type="HAMAP" id="MF_00149">
    <property type="entry name" value="DNA_mis_repair"/>
    <property type="match status" value="1"/>
</dbReference>
<dbReference type="InterPro" id="IPR014762">
    <property type="entry name" value="DNA_mismatch_repair_CS"/>
</dbReference>
<dbReference type="InterPro" id="IPR020667">
    <property type="entry name" value="DNA_mismatch_repair_MutL"/>
</dbReference>
<dbReference type="InterPro" id="IPR013507">
    <property type="entry name" value="DNA_mismatch_S5_2-like"/>
</dbReference>
<dbReference type="InterPro" id="IPR036890">
    <property type="entry name" value="HATPase_C_sf"/>
</dbReference>
<dbReference type="InterPro" id="IPR002099">
    <property type="entry name" value="MutL/Mlh/PMS"/>
</dbReference>
<dbReference type="InterPro" id="IPR038973">
    <property type="entry name" value="MutL/Mlh/Pms-like"/>
</dbReference>
<dbReference type="InterPro" id="IPR014790">
    <property type="entry name" value="MutL_C"/>
</dbReference>
<dbReference type="InterPro" id="IPR042120">
    <property type="entry name" value="MutL_C_dimsub"/>
</dbReference>
<dbReference type="InterPro" id="IPR042121">
    <property type="entry name" value="MutL_C_regsub"/>
</dbReference>
<dbReference type="InterPro" id="IPR037198">
    <property type="entry name" value="MutL_C_sf"/>
</dbReference>
<dbReference type="InterPro" id="IPR020568">
    <property type="entry name" value="Ribosomal_Su5_D2-typ_SF"/>
</dbReference>
<dbReference type="InterPro" id="IPR014721">
    <property type="entry name" value="Ribsml_uS5_D2-typ_fold_subgr"/>
</dbReference>
<dbReference type="NCBIfam" id="TIGR00585">
    <property type="entry name" value="mutl"/>
    <property type="match status" value="1"/>
</dbReference>
<dbReference type="NCBIfam" id="NF000954">
    <property type="entry name" value="PRK00095.2-5"/>
    <property type="match status" value="1"/>
</dbReference>
<dbReference type="PANTHER" id="PTHR10073">
    <property type="entry name" value="DNA MISMATCH REPAIR PROTEIN MLH, PMS, MUTL"/>
    <property type="match status" value="1"/>
</dbReference>
<dbReference type="PANTHER" id="PTHR10073:SF12">
    <property type="entry name" value="DNA MISMATCH REPAIR PROTEIN MLH1"/>
    <property type="match status" value="1"/>
</dbReference>
<dbReference type="Pfam" id="PF01119">
    <property type="entry name" value="DNA_mis_repair"/>
    <property type="match status" value="1"/>
</dbReference>
<dbReference type="Pfam" id="PF13589">
    <property type="entry name" value="HATPase_c_3"/>
    <property type="match status" value="1"/>
</dbReference>
<dbReference type="Pfam" id="PF08676">
    <property type="entry name" value="MutL_C"/>
    <property type="match status" value="1"/>
</dbReference>
<dbReference type="SMART" id="SM01340">
    <property type="entry name" value="DNA_mis_repair"/>
    <property type="match status" value="1"/>
</dbReference>
<dbReference type="SMART" id="SM00853">
    <property type="entry name" value="MutL_C"/>
    <property type="match status" value="1"/>
</dbReference>
<dbReference type="SUPFAM" id="SSF55874">
    <property type="entry name" value="ATPase domain of HSP90 chaperone/DNA topoisomerase II/histidine kinase"/>
    <property type="match status" value="1"/>
</dbReference>
<dbReference type="SUPFAM" id="SSF118116">
    <property type="entry name" value="DNA mismatch repair protein MutL"/>
    <property type="match status" value="1"/>
</dbReference>
<dbReference type="SUPFAM" id="SSF54211">
    <property type="entry name" value="Ribosomal protein S5 domain 2-like"/>
    <property type="match status" value="1"/>
</dbReference>
<dbReference type="PROSITE" id="PS00058">
    <property type="entry name" value="DNA_MISMATCH_REPAIR_1"/>
    <property type="match status" value="1"/>
</dbReference>
<organism>
    <name type="scientific">Chlamydia trachomatis serovar A (strain ATCC VR-571B / DSM 19440 / HAR-13)</name>
    <dbReference type="NCBI Taxonomy" id="315277"/>
    <lineage>
        <taxon>Bacteria</taxon>
        <taxon>Pseudomonadati</taxon>
        <taxon>Chlamydiota</taxon>
        <taxon>Chlamydiia</taxon>
        <taxon>Chlamydiales</taxon>
        <taxon>Chlamydiaceae</taxon>
        <taxon>Chlamydia/Chlamydophila group</taxon>
        <taxon>Chlamydia</taxon>
    </lineage>
</organism>
<keyword id="KW-0227">DNA damage</keyword>
<keyword id="KW-0234">DNA repair</keyword>